<accession>Q4KJF1</accession>
<dbReference type="EMBL" id="CP000076">
    <property type="protein sequence ID" value="AAY95897.1"/>
    <property type="molecule type" value="Genomic_DNA"/>
</dbReference>
<dbReference type="RefSeq" id="WP_011058861.1">
    <property type="nucleotide sequence ID" value="NC_004129.6"/>
</dbReference>
<dbReference type="SMR" id="Q4KJF1"/>
<dbReference type="STRING" id="220664.PFL_0488"/>
<dbReference type="KEGG" id="pfl:PFL_0488"/>
<dbReference type="PATRIC" id="fig|220664.5.peg.501"/>
<dbReference type="eggNOG" id="COG3263">
    <property type="taxonomic scope" value="Bacteria"/>
</dbReference>
<dbReference type="HOGENOM" id="CLU_005912_9_2_6"/>
<dbReference type="Proteomes" id="UP000008540">
    <property type="component" value="Chromosome"/>
</dbReference>
<dbReference type="GO" id="GO:0005886">
    <property type="term" value="C:plasma membrane"/>
    <property type="evidence" value="ECO:0007669"/>
    <property type="project" value="UniProtKB-SubCell"/>
</dbReference>
<dbReference type="GO" id="GO:0050660">
    <property type="term" value="F:flavin adenine dinucleotide binding"/>
    <property type="evidence" value="ECO:0007669"/>
    <property type="project" value="InterPro"/>
</dbReference>
<dbReference type="GO" id="GO:0015386">
    <property type="term" value="F:potassium:proton antiporter activity"/>
    <property type="evidence" value="ECO:0007669"/>
    <property type="project" value="UniProtKB-UniRule"/>
</dbReference>
<dbReference type="GO" id="GO:0006884">
    <property type="term" value="P:cell volume homeostasis"/>
    <property type="evidence" value="ECO:0007669"/>
    <property type="project" value="InterPro"/>
</dbReference>
<dbReference type="Gene3D" id="1.20.1530.20">
    <property type="match status" value="1"/>
</dbReference>
<dbReference type="Gene3D" id="3.30.465.10">
    <property type="match status" value="1"/>
</dbReference>
<dbReference type="Gene3D" id="3.30.70.1450">
    <property type="entry name" value="Regulator of K+ conductance, C-terminal domain"/>
    <property type="match status" value="1"/>
</dbReference>
<dbReference type="HAMAP" id="MF_01075">
    <property type="entry name" value="NhaP2"/>
    <property type="match status" value="1"/>
</dbReference>
<dbReference type="InterPro" id="IPR006153">
    <property type="entry name" value="Cation/H_exchanger_TM"/>
</dbReference>
<dbReference type="InterPro" id="IPR036318">
    <property type="entry name" value="FAD-bd_PCMH-like_sf"/>
</dbReference>
<dbReference type="InterPro" id="IPR016169">
    <property type="entry name" value="FAD-bd_PCMH_sub2"/>
</dbReference>
<dbReference type="InterPro" id="IPR038770">
    <property type="entry name" value="Na+/solute_symporter_sf"/>
</dbReference>
<dbReference type="InterPro" id="IPR023729">
    <property type="entry name" value="NhaP2"/>
</dbReference>
<dbReference type="InterPro" id="IPR006037">
    <property type="entry name" value="RCK_C"/>
</dbReference>
<dbReference type="InterPro" id="IPR036721">
    <property type="entry name" value="RCK_C_sf"/>
</dbReference>
<dbReference type="InterPro" id="IPR005170">
    <property type="entry name" value="Transptr-assoc_dom"/>
</dbReference>
<dbReference type="NCBIfam" id="NF003714">
    <property type="entry name" value="PRK05326.1-1"/>
    <property type="match status" value="1"/>
</dbReference>
<dbReference type="NCBIfam" id="NF003715">
    <property type="entry name" value="PRK05326.1-2"/>
    <property type="match status" value="1"/>
</dbReference>
<dbReference type="NCBIfam" id="NF003716">
    <property type="entry name" value="PRK05326.1-3"/>
    <property type="match status" value="1"/>
</dbReference>
<dbReference type="PANTHER" id="PTHR32507:SF7">
    <property type="entry name" value="K(+)_H(+) ANTIPORTER NHAP2"/>
    <property type="match status" value="1"/>
</dbReference>
<dbReference type="PANTHER" id="PTHR32507">
    <property type="entry name" value="NA(+)/H(+) ANTIPORTER 1"/>
    <property type="match status" value="1"/>
</dbReference>
<dbReference type="Pfam" id="PF03471">
    <property type="entry name" value="CorC_HlyC"/>
    <property type="match status" value="1"/>
</dbReference>
<dbReference type="Pfam" id="PF00999">
    <property type="entry name" value="Na_H_Exchanger"/>
    <property type="match status" value="1"/>
</dbReference>
<dbReference type="Pfam" id="PF02080">
    <property type="entry name" value="TrkA_C"/>
    <property type="match status" value="1"/>
</dbReference>
<dbReference type="SMART" id="SM01091">
    <property type="entry name" value="CorC_HlyC"/>
    <property type="match status" value="1"/>
</dbReference>
<dbReference type="SUPFAM" id="SSF56176">
    <property type="entry name" value="FAD-binding/transporter-associated domain-like"/>
    <property type="match status" value="1"/>
</dbReference>
<dbReference type="SUPFAM" id="SSF116726">
    <property type="entry name" value="TrkA C-terminal domain-like"/>
    <property type="match status" value="1"/>
</dbReference>
<dbReference type="PROSITE" id="PS51202">
    <property type="entry name" value="RCK_C"/>
    <property type="match status" value="1"/>
</dbReference>
<keyword id="KW-0050">Antiport</keyword>
<keyword id="KW-0997">Cell inner membrane</keyword>
<keyword id="KW-1003">Cell membrane</keyword>
<keyword id="KW-0406">Ion transport</keyword>
<keyword id="KW-0472">Membrane</keyword>
<keyword id="KW-0630">Potassium</keyword>
<keyword id="KW-0633">Potassium transport</keyword>
<keyword id="KW-0812">Transmembrane</keyword>
<keyword id="KW-1133">Transmembrane helix</keyword>
<keyword id="KW-0813">Transport</keyword>
<organism>
    <name type="scientific">Pseudomonas fluorescens (strain ATCC BAA-477 / NRRL B-23932 / Pf-5)</name>
    <dbReference type="NCBI Taxonomy" id="220664"/>
    <lineage>
        <taxon>Bacteria</taxon>
        <taxon>Pseudomonadati</taxon>
        <taxon>Pseudomonadota</taxon>
        <taxon>Gammaproteobacteria</taxon>
        <taxon>Pseudomonadales</taxon>
        <taxon>Pseudomonadaceae</taxon>
        <taxon>Pseudomonas</taxon>
    </lineage>
</organism>
<evidence type="ECO:0000255" key="1">
    <source>
        <dbReference type="HAMAP-Rule" id="MF_01075"/>
    </source>
</evidence>
<feature type="chain" id="PRO_0000052391" description="K(+)/H(+) antiporter NhaP2">
    <location>
        <begin position="1"/>
        <end position="580"/>
    </location>
</feature>
<feature type="transmembrane region" description="Helical" evidence="1">
    <location>
        <begin position="6"/>
        <end position="26"/>
    </location>
</feature>
<feature type="transmembrane region" description="Helical" evidence="1">
    <location>
        <begin position="34"/>
        <end position="54"/>
    </location>
</feature>
<feature type="transmembrane region" description="Helical" evidence="1">
    <location>
        <begin position="57"/>
        <end position="77"/>
    </location>
</feature>
<feature type="transmembrane region" description="Helical" evidence="1">
    <location>
        <begin position="94"/>
        <end position="114"/>
    </location>
</feature>
<feature type="transmembrane region" description="Helical" evidence="1">
    <location>
        <begin position="121"/>
        <end position="141"/>
    </location>
</feature>
<feature type="transmembrane region" description="Helical" evidence="1">
    <location>
        <begin position="162"/>
        <end position="182"/>
    </location>
</feature>
<feature type="transmembrane region" description="Helical" evidence="1">
    <location>
        <begin position="193"/>
        <end position="213"/>
    </location>
</feature>
<feature type="transmembrane region" description="Helical" evidence="1">
    <location>
        <begin position="217"/>
        <end position="237"/>
    </location>
</feature>
<feature type="transmembrane region" description="Helical" evidence="1">
    <location>
        <begin position="240"/>
        <end position="260"/>
    </location>
</feature>
<feature type="transmembrane region" description="Helical" evidence="1">
    <location>
        <begin position="269"/>
        <end position="289"/>
    </location>
</feature>
<feature type="transmembrane region" description="Helical" evidence="1">
    <location>
        <begin position="292"/>
        <end position="312"/>
    </location>
</feature>
<feature type="transmembrane region" description="Helical" evidence="1">
    <location>
        <begin position="334"/>
        <end position="354"/>
    </location>
</feature>
<feature type="transmembrane region" description="Helical" evidence="1">
    <location>
        <begin position="366"/>
        <end position="386"/>
    </location>
</feature>
<feature type="domain" description="RCK C-terminal" evidence="1">
    <location>
        <begin position="402"/>
        <end position="484"/>
    </location>
</feature>
<gene>
    <name evidence="1" type="primary">nhaP2</name>
    <name type="synonym">cvrA</name>
    <name type="ordered locus">PFL_0488</name>
</gene>
<sequence>MNATTINSLFLIGALLVGASILVSSLSSRLGIPILVIILAVGMTAGVDGGGIIFDNYPTAYLVGNLALAVILLDGGLRTRVASFRVALWPALSLATVGVLITTGLTGMAAAWLFDLNLIQGLLIGAIVGSTDAAAVFSLLGGKGLNERVTASLEIESGSNDPMAVFLTVTLIDMLASGHTGLHWSLLTDLIREFGIGAVIGLGGGWLMLQLVNRIHLATGLYPILVVAGGLVVFALTNALHGSGFLAVYLCGLVIGNRPVRSRHGILHMLDGMAWLAQIGMFLVLGLLVTPHDLLPIALPALGLALWMILFARPLSVLVGLAPFKAFHGREKAFISWVGLRGAVPIILAVFPLMAGLPNAQLYFNLAFFIVLISLLVQGTSLPWVAKWLKVTVPPEPAPISRAALEVHVTSEWELFVYRLGAEKWCIGAALRELKMPEGTRIAALFRGQQLLHPSGSTVLEADDLLCVIGHEHNLPALGKLFSQAPERGLDLRFFGDFVLEGDAQLGAVSALYGLKLDGQDADMPLGAFIAQKVGGAPVVGDQVEWNNTIWTVAVMDGNKIGKVGVRFPEGSRPGPGLFL</sequence>
<protein>
    <recommendedName>
        <fullName evidence="1">K(+)/H(+) antiporter NhaP2</fullName>
    </recommendedName>
    <alternativeName>
        <fullName evidence="1">Potassium/proton antiporter NhaP2</fullName>
    </alternativeName>
</protein>
<proteinExistence type="inferred from homology"/>
<comment type="function">
    <text evidence="1">K(+)/H(+) antiporter that extrudes potassium in exchange for external protons and maintains the internal concentration of potassium under toxic levels.</text>
</comment>
<comment type="catalytic activity">
    <reaction evidence="1">
        <text>K(+)(in) + H(+)(out) = K(+)(out) + H(+)(in)</text>
        <dbReference type="Rhea" id="RHEA:29467"/>
        <dbReference type="ChEBI" id="CHEBI:15378"/>
        <dbReference type="ChEBI" id="CHEBI:29103"/>
    </reaction>
    <physiologicalReaction direction="left-to-right" evidence="1">
        <dbReference type="Rhea" id="RHEA:29468"/>
    </physiologicalReaction>
</comment>
<comment type="subcellular location">
    <subcellularLocation>
        <location evidence="1">Cell inner membrane</location>
        <topology evidence="1">Multi-pass membrane protein</topology>
    </subcellularLocation>
</comment>
<comment type="similarity">
    <text evidence="1">Belongs to the monovalent cation:proton antiporter 1 (CPA1) transporter (TC 2.A.36) family. NhaP2 subfamily.</text>
</comment>
<reference key="1">
    <citation type="journal article" date="2005" name="Nat. Biotechnol.">
        <title>Complete genome sequence of the plant commensal Pseudomonas fluorescens Pf-5.</title>
        <authorList>
            <person name="Paulsen I.T."/>
            <person name="Press C.M."/>
            <person name="Ravel J."/>
            <person name="Kobayashi D.Y."/>
            <person name="Myers G.S.A."/>
            <person name="Mavrodi D.V."/>
            <person name="DeBoy R.T."/>
            <person name="Seshadri R."/>
            <person name="Ren Q."/>
            <person name="Madupu R."/>
            <person name="Dodson R.J."/>
            <person name="Durkin A.S."/>
            <person name="Brinkac L.M."/>
            <person name="Daugherty S.C."/>
            <person name="Sullivan S.A."/>
            <person name="Rosovitz M.J."/>
            <person name="Gwinn M.L."/>
            <person name="Zhou L."/>
            <person name="Schneider D.J."/>
            <person name="Cartinhour S.W."/>
            <person name="Nelson W.C."/>
            <person name="Weidman J."/>
            <person name="Watkins K."/>
            <person name="Tran K."/>
            <person name="Khouri H."/>
            <person name="Pierson E.A."/>
            <person name="Pierson L.S. III"/>
            <person name="Thomashow L.S."/>
            <person name="Loper J.E."/>
        </authorList>
    </citation>
    <scope>NUCLEOTIDE SEQUENCE [LARGE SCALE GENOMIC DNA]</scope>
    <source>
        <strain>ATCC BAA-477 / NRRL B-23932 / Pf-5</strain>
    </source>
</reference>
<name>NHAP2_PSEF5</name>